<gene>
    <name evidence="1" type="primary">cobS</name>
    <name type="ordered locus">BMEI1100</name>
</gene>
<keyword id="KW-0997">Cell inner membrane</keyword>
<keyword id="KW-1003">Cell membrane</keyword>
<keyword id="KW-0169">Cobalamin biosynthesis</keyword>
<keyword id="KW-0460">Magnesium</keyword>
<keyword id="KW-0472">Membrane</keyword>
<keyword id="KW-0808">Transferase</keyword>
<keyword id="KW-0812">Transmembrane</keyword>
<keyword id="KW-1133">Transmembrane helix</keyword>
<comment type="function">
    <text evidence="1">Joins adenosylcobinamide-GDP and alpha-ribazole to generate adenosylcobalamin (Ado-cobalamin). Also synthesizes adenosylcobalamin 5'-phosphate from adenosylcobinamide-GDP and alpha-ribazole 5'-phosphate.</text>
</comment>
<comment type="catalytic activity">
    <reaction evidence="1">
        <text>alpha-ribazole + adenosylcob(III)inamide-GDP = adenosylcob(III)alamin + GMP + H(+)</text>
        <dbReference type="Rhea" id="RHEA:16049"/>
        <dbReference type="ChEBI" id="CHEBI:10329"/>
        <dbReference type="ChEBI" id="CHEBI:15378"/>
        <dbReference type="ChEBI" id="CHEBI:18408"/>
        <dbReference type="ChEBI" id="CHEBI:58115"/>
        <dbReference type="ChEBI" id="CHEBI:60487"/>
        <dbReference type="EC" id="2.7.8.26"/>
    </reaction>
</comment>
<comment type="catalytic activity">
    <reaction evidence="1">
        <text>alpha-ribazole 5'-phosphate + adenosylcob(III)inamide-GDP = adenosylcob(III)alamin 5'-phosphate + GMP + H(+)</text>
        <dbReference type="Rhea" id="RHEA:23560"/>
        <dbReference type="ChEBI" id="CHEBI:15378"/>
        <dbReference type="ChEBI" id="CHEBI:57918"/>
        <dbReference type="ChEBI" id="CHEBI:58115"/>
        <dbReference type="ChEBI" id="CHEBI:60487"/>
        <dbReference type="ChEBI" id="CHEBI:60493"/>
        <dbReference type="EC" id="2.7.8.26"/>
    </reaction>
</comment>
<comment type="cofactor">
    <cofactor evidence="1">
        <name>Mg(2+)</name>
        <dbReference type="ChEBI" id="CHEBI:18420"/>
    </cofactor>
</comment>
<comment type="pathway">
    <text evidence="1">Cofactor biosynthesis; adenosylcobalamin biosynthesis; adenosylcobalamin from cob(II)yrinate a,c-diamide: step 7/7.</text>
</comment>
<comment type="subcellular location">
    <subcellularLocation>
        <location evidence="1">Cell inner membrane</location>
        <topology evidence="1">Multi-pass membrane protein</topology>
    </subcellularLocation>
</comment>
<comment type="similarity">
    <text evidence="1">Belongs to the CobS family.</text>
</comment>
<reference key="1">
    <citation type="journal article" date="2002" name="Proc. Natl. Acad. Sci. U.S.A.">
        <title>The genome sequence of the facultative intracellular pathogen Brucella melitensis.</title>
        <authorList>
            <person name="DelVecchio V.G."/>
            <person name="Kapatral V."/>
            <person name="Redkar R.J."/>
            <person name="Patra G."/>
            <person name="Mujer C."/>
            <person name="Los T."/>
            <person name="Ivanova N."/>
            <person name="Anderson I."/>
            <person name="Bhattacharyya A."/>
            <person name="Lykidis A."/>
            <person name="Reznik G."/>
            <person name="Jablonski L."/>
            <person name="Larsen N."/>
            <person name="D'Souza M."/>
            <person name="Bernal A."/>
            <person name="Mazur M."/>
            <person name="Goltsman E."/>
            <person name="Selkov E."/>
            <person name="Elzer P.H."/>
            <person name="Hagius S."/>
            <person name="O'Callaghan D."/>
            <person name="Letesson J.-J."/>
            <person name="Haselkorn R."/>
            <person name="Kyrpides N.C."/>
            <person name="Overbeek R."/>
        </authorList>
    </citation>
    <scope>NUCLEOTIDE SEQUENCE [LARGE SCALE GENOMIC DNA]</scope>
    <source>
        <strain>ATCC 23456 / CCUG 17765 / NCTC 10094 / 16M</strain>
    </source>
</reference>
<dbReference type="EC" id="2.7.8.26" evidence="1"/>
<dbReference type="EMBL" id="AE008917">
    <property type="protein sequence ID" value="AAL52281.1"/>
    <property type="molecule type" value="Genomic_DNA"/>
</dbReference>
<dbReference type="PIR" id="AF3389">
    <property type="entry name" value="AF3389"/>
</dbReference>
<dbReference type="RefSeq" id="WP_004683686.1">
    <property type="nucleotide sequence ID" value="NZ_GG703778.1"/>
</dbReference>
<dbReference type="GeneID" id="29593948"/>
<dbReference type="KEGG" id="bme:BMEI1100"/>
<dbReference type="KEGG" id="bmel:DK63_313"/>
<dbReference type="PATRIC" id="fig|224914.52.peg.324"/>
<dbReference type="eggNOG" id="COG0368">
    <property type="taxonomic scope" value="Bacteria"/>
</dbReference>
<dbReference type="PhylomeDB" id="Q8YGQ8"/>
<dbReference type="UniPathway" id="UPA00148">
    <property type="reaction ID" value="UER00238"/>
</dbReference>
<dbReference type="Proteomes" id="UP000000419">
    <property type="component" value="Chromosome I"/>
</dbReference>
<dbReference type="GO" id="GO:0005886">
    <property type="term" value="C:plasma membrane"/>
    <property type="evidence" value="ECO:0007669"/>
    <property type="project" value="UniProtKB-SubCell"/>
</dbReference>
<dbReference type="GO" id="GO:0051073">
    <property type="term" value="F:adenosylcobinamide-GDP ribazoletransferase activity"/>
    <property type="evidence" value="ECO:0007669"/>
    <property type="project" value="UniProtKB-UniRule"/>
</dbReference>
<dbReference type="GO" id="GO:0008818">
    <property type="term" value="F:cobalamin 5'-phosphate synthase activity"/>
    <property type="evidence" value="ECO:0007669"/>
    <property type="project" value="UniProtKB-UniRule"/>
</dbReference>
<dbReference type="GO" id="GO:0009236">
    <property type="term" value="P:cobalamin biosynthetic process"/>
    <property type="evidence" value="ECO:0007669"/>
    <property type="project" value="UniProtKB-UniRule"/>
</dbReference>
<dbReference type="HAMAP" id="MF_00719">
    <property type="entry name" value="CobS"/>
    <property type="match status" value="1"/>
</dbReference>
<dbReference type="InterPro" id="IPR003805">
    <property type="entry name" value="CobS"/>
</dbReference>
<dbReference type="NCBIfam" id="TIGR00317">
    <property type="entry name" value="cobS"/>
    <property type="match status" value="1"/>
</dbReference>
<dbReference type="NCBIfam" id="NF001276">
    <property type="entry name" value="PRK00235.1-2"/>
    <property type="match status" value="1"/>
</dbReference>
<dbReference type="PANTHER" id="PTHR34148">
    <property type="entry name" value="ADENOSYLCOBINAMIDE-GDP RIBAZOLETRANSFERASE"/>
    <property type="match status" value="1"/>
</dbReference>
<dbReference type="PANTHER" id="PTHR34148:SF1">
    <property type="entry name" value="ADENOSYLCOBINAMIDE-GDP RIBAZOLETRANSFERASE"/>
    <property type="match status" value="1"/>
</dbReference>
<dbReference type="Pfam" id="PF02654">
    <property type="entry name" value="CobS"/>
    <property type="match status" value="1"/>
</dbReference>
<feature type="chain" id="PRO_0000146867" description="Adenosylcobinamide-GDP ribazoletransferase">
    <location>
        <begin position="1"/>
        <end position="260"/>
    </location>
</feature>
<feature type="transmembrane region" description="Helical" evidence="1">
    <location>
        <begin position="42"/>
        <end position="62"/>
    </location>
</feature>
<feature type="transmembrane region" description="Helical" evidence="1">
    <location>
        <begin position="64"/>
        <end position="84"/>
    </location>
</feature>
<feature type="transmembrane region" description="Helical" evidence="1">
    <location>
        <begin position="117"/>
        <end position="137"/>
    </location>
</feature>
<feature type="transmembrane region" description="Helical" evidence="1">
    <location>
        <begin position="144"/>
        <end position="164"/>
    </location>
</feature>
<feature type="transmembrane region" description="Helical" evidence="1">
    <location>
        <begin position="192"/>
        <end position="212"/>
    </location>
</feature>
<feature type="transmembrane region" description="Helical" evidence="1">
    <location>
        <begin position="214"/>
        <end position="234"/>
    </location>
</feature>
<feature type="transmembrane region" description="Helical" evidence="1">
    <location>
        <begin position="240"/>
        <end position="260"/>
    </location>
</feature>
<protein>
    <recommendedName>
        <fullName evidence="1">Adenosylcobinamide-GDP ribazoletransferase</fullName>
        <ecNumber evidence="1">2.7.8.26</ecNumber>
    </recommendedName>
    <alternativeName>
        <fullName evidence="1">Cobalamin synthase</fullName>
    </alternativeName>
    <alternativeName>
        <fullName evidence="1">Cobalamin-5'-phosphate synthase</fullName>
    </alternativeName>
</protein>
<proteinExistence type="inferred from homology"/>
<accession>Q8YGQ8</accession>
<organism>
    <name type="scientific">Brucella melitensis biotype 1 (strain ATCC 23456 / CCUG 17765 / NCTC 10094 / 16M)</name>
    <dbReference type="NCBI Taxonomy" id="224914"/>
    <lineage>
        <taxon>Bacteria</taxon>
        <taxon>Pseudomonadati</taxon>
        <taxon>Pseudomonadota</taxon>
        <taxon>Alphaproteobacteria</taxon>
        <taxon>Hyphomicrobiales</taxon>
        <taxon>Brucellaceae</taxon>
        <taxon>Brucella/Ochrobactrum group</taxon>
        <taxon>Brucella</taxon>
    </lineage>
</organism>
<sequence length="260" mass="26432">MQRNGLIGDTIRSLGFLSRLPLPQGWFDNTDDSLPRNARAFPLAGGILGLLAGVALLIANAISLPPLAAALIAIGALAAMTGALHEDGLGDTADGFFGASTPDRRLDIMKDSRIGTFAALTLVIWTGVKASLLMAIIARAGAGYALLALIGTEAASRAGMLAFWHALPSARPGGLADSMGQPQWETVVCGCGLGLALLAIGFLPSGGMVALINALVLMTVVLFGFARLCMAKIGGRTGDTLGAAQQIGSLAALIGLVMAL</sequence>
<name>COBS_BRUME</name>
<evidence type="ECO:0000255" key="1">
    <source>
        <dbReference type="HAMAP-Rule" id="MF_00719"/>
    </source>
</evidence>